<name>FABH_CERS1</name>
<comment type="function">
    <text evidence="1">Catalyzes the condensation reaction of fatty acid synthesis by the addition to an acyl acceptor of two carbons from malonyl-ACP. Catalyzes the first condensation reaction which initiates fatty acid synthesis and may therefore play a role in governing the total rate of fatty acid production. Possesses both acetoacetyl-ACP synthase and acetyl transacylase activities. Its substrate specificity determines the biosynthesis of branched-chain and/or straight-chain of fatty acids.</text>
</comment>
<comment type="catalytic activity">
    <reaction evidence="1">
        <text>malonyl-[ACP] + acetyl-CoA + H(+) = 3-oxobutanoyl-[ACP] + CO2 + CoA</text>
        <dbReference type="Rhea" id="RHEA:12080"/>
        <dbReference type="Rhea" id="RHEA-COMP:9623"/>
        <dbReference type="Rhea" id="RHEA-COMP:9625"/>
        <dbReference type="ChEBI" id="CHEBI:15378"/>
        <dbReference type="ChEBI" id="CHEBI:16526"/>
        <dbReference type="ChEBI" id="CHEBI:57287"/>
        <dbReference type="ChEBI" id="CHEBI:57288"/>
        <dbReference type="ChEBI" id="CHEBI:78449"/>
        <dbReference type="ChEBI" id="CHEBI:78450"/>
        <dbReference type="EC" id="2.3.1.180"/>
    </reaction>
</comment>
<comment type="pathway">
    <text evidence="1">Lipid metabolism; fatty acid biosynthesis.</text>
</comment>
<comment type="subunit">
    <text evidence="1">Homodimer.</text>
</comment>
<comment type="subcellular location">
    <subcellularLocation>
        <location evidence="1">Cytoplasm</location>
    </subcellularLocation>
</comment>
<comment type="domain">
    <text evidence="1">The last Arg residue of the ACP-binding site is essential for the weak association between ACP/AcpP and FabH.</text>
</comment>
<comment type="similarity">
    <text evidence="1">Belongs to the thiolase-like superfamily. FabH family.</text>
</comment>
<feature type="chain" id="PRO_1000056395" description="Beta-ketoacyl-[acyl-carrier-protein] synthase III">
    <location>
        <begin position="1"/>
        <end position="323"/>
    </location>
</feature>
<feature type="region of interest" description="ACP-binding" evidence="1">
    <location>
        <begin position="251"/>
        <end position="255"/>
    </location>
</feature>
<feature type="active site" evidence="1">
    <location>
        <position position="114"/>
    </location>
</feature>
<feature type="active site" evidence="1">
    <location>
        <position position="250"/>
    </location>
</feature>
<feature type="active site" evidence="1">
    <location>
        <position position="280"/>
    </location>
</feature>
<sequence>MTIRAVVRGVGHYLPDRVVPNSELEAIVETTDEWIRTRSGIERRHFAAEGQTTSDLAARAARAALDDAGLQPDDIDTLIVATSTADLTFPSAATMVQAALGMTRGFAFDVQAVCAGFVYALANADALIRSGQAQRVLVIGAETFSRLMDWNDRATCVLFGDGAGAVVLEGTESAGTSADRGILATDLHSDGRFKDLLYVDGGSSTGTTGHLRMQGREVFRHAVEKLAETAHTALEKAGLGAGDVDWIVPHQANLRIISATAQRMQVPMDRVILTVQDHGNTSAASIPLALSVGKARGQIKEGDLLVTEAIGGGLAWGSVVLRW</sequence>
<dbReference type="EC" id="2.3.1.180" evidence="1"/>
<dbReference type="EMBL" id="CP000577">
    <property type="protein sequence ID" value="ABN76380.1"/>
    <property type="molecule type" value="Genomic_DNA"/>
</dbReference>
<dbReference type="RefSeq" id="WP_011840909.1">
    <property type="nucleotide sequence ID" value="NC_009049.1"/>
</dbReference>
<dbReference type="SMR" id="A3PJ64"/>
<dbReference type="KEGG" id="rsh:Rsph17029_1270"/>
<dbReference type="HOGENOM" id="CLU_039592_3_1_5"/>
<dbReference type="UniPathway" id="UPA00094"/>
<dbReference type="GO" id="GO:0005737">
    <property type="term" value="C:cytoplasm"/>
    <property type="evidence" value="ECO:0007669"/>
    <property type="project" value="UniProtKB-SubCell"/>
</dbReference>
<dbReference type="GO" id="GO:0004315">
    <property type="term" value="F:3-oxoacyl-[acyl-carrier-protein] synthase activity"/>
    <property type="evidence" value="ECO:0007669"/>
    <property type="project" value="InterPro"/>
</dbReference>
<dbReference type="GO" id="GO:0033818">
    <property type="term" value="F:beta-ketoacyl-acyl-carrier-protein synthase III activity"/>
    <property type="evidence" value="ECO:0007669"/>
    <property type="project" value="UniProtKB-UniRule"/>
</dbReference>
<dbReference type="GO" id="GO:0006633">
    <property type="term" value="P:fatty acid biosynthetic process"/>
    <property type="evidence" value="ECO:0007669"/>
    <property type="project" value="UniProtKB-UniRule"/>
</dbReference>
<dbReference type="GO" id="GO:0044550">
    <property type="term" value="P:secondary metabolite biosynthetic process"/>
    <property type="evidence" value="ECO:0007669"/>
    <property type="project" value="TreeGrafter"/>
</dbReference>
<dbReference type="CDD" id="cd00830">
    <property type="entry name" value="KAS_III"/>
    <property type="match status" value="1"/>
</dbReference>
<dbReference type="FunFam" id="3.40.47.10:FF:000004">
    <property type="entry name" value="3-oxoacyl-[acyl-carrier-protein] synthase 3"/>
    <property type="match status" value="1"/>
</dbReference>
<dbReference type="Gene3D" id="3.40.47.10">
    <property type="match status" value="1"/>
</dbReference>
<dbReference type="HAMAP" id="MF_01815">
    <property type="entry name" value="FabH"/>
    <property type="match status" value="1"/>
</dbReference>
<dbReference type="InterPro" id="IPR013747">
    <property type="entry name" value="ACP_syn_III_C"/>
</dbReference>
<dbReference type="InterPro" id="IPR013751">
    <property type="entry name" value="ACP_syn_III_N"/>
</dbReference>
<dbReference type="InterPro" id="IPR004655">
    <property type="entry name" value="FabH"/>
</dbReference>
<dbReference type="InterPro" id="IPR016039">
    <property type="entry name" value="Thiolase-like"/>
</dbReference>
<dbReference type="NCBIfam" id="TIGR00747">
    <property type="entry name" value="fabH"/>
    <property type="match status" value="1"/>
</dbReference>
<dbReference type="NCBIfam" id="NF006829">
    <property type="entry name" value="PRK09352.1"/>
    <property type="match status" value="1"/>
</dbReference>
<dbReference type="PANTHER" id="PTHR34069">
    <property type="entry name" value="3-OXOACYL-[ACYL-CARRIER-PROTEIN] SYNTHASE 3"/>
    <property type="match status" value="1"/>
</dbReference>
<dbReference type="PANTHER" id="PTHR34069:SF2">
    <property type="entry name" value="BETA-KETOACYL-[ACYL-CARRIER-PROTEIN] SYNTHASE III"/>
    <property type="match status" value="1"/>
</dbReference>
<dbReference type="Pfam" id="PF08545">
    <property type="entry name" value="ACP_syn_III"/>
    <property type="match status" value="1"/>
</dbReference>
<dbReference type="Pfam" id="PF08541">
    <property type="entry name" value="ACP_syn_III_C"/>
    <property type="match status" value="1"/>
</dbReference>
<dbReference type="SUPFAM" id="SSF53901">
    <property type="entry name" value="Thiolase-like"/>
    <property type="match status" value="1"/>
</dbReference>
<proteinExistence type="inferred from homology"/>
<gene>
    <name evidence="1" type="primary">fabH</name>
    <name type="ordered locus">Rsph17029_1270</name>
</gene>
<keyword id="KW-0012">Acyltransferase</keyword>
<keyword id="KW-0963">Cytoplasm</keyword>
<keyword id="KW-0275">Fatty acid biosynthesis</keyword>
<keyword id="KW-0276">Fatty acid metabolism</keyword>
<keyword id="KW-0444">Lipid biosynthesis</keyword>
<keyword id="KW-0443">Lipid metabolism</keyword>
<keyword id="KW-0511">Multifunctional enzyme</keyword>
<keyword id="KW-0808">Transferase</keyword>
<protein>
    <recommendedName>
        <fullName evidence="1">Beta-ketoacyl-[acyl-carrier-protein] synthase III</fullName>
        <shortName evidence="1">Beta-ketoacyl-ACP synthase III</shortName>
        <shortName evidence="1">KAS III</shortName>
        <ecNumber evidence="1">2.3.1.180</ecNumber>
    </recommendedName>
    <alternativeName>
        <fullName evidence="1">3-oxoacyl-[acyl-carrier-protein] synthase 3</fullName>
    </alternativeName>
    <alternativeName>
        <fullName evidence="1">3-oxoacyl-[acyl-carrier-protein] synthase III</fullName>
    </alternativeName>
</protein>
<reference key="1">
    <citation type="submission" date="2007-02" db="EMBL/GenBank/DDBJ databases">
        <title>Complete sequence of chromosome 1 of Rhodobacter sphaeroides ATCC 17029.</title>
        <authorList>
            <person name="Copeland A."/>
            <person name="Lucas S."/>
            <person name="Lapidus A."/>
            <person name="Barry K."/>
            <person name="Detter J.C."/>
            <person name="Glavina del Rio T."/>
            <person name="Hammon N."/>
            <person name="Israni S."/>
            <person name="Dalin E."/>
            <person name="Tice H."/>
            <person name="Pitluck S."/>
            <person name="Kiss H."/>
            <person name="Brettin T."/>
            <person name="Bruce D."/>
            <person name="Han C."/>
            <person name="Tapia R."/>
            <person name="Gilna P."/>
            <person name="Schmutz J."/>
            <person name="Larimer F."/>
            <person name="Land M."/>
            <person name="Hauser L."/>
            <person name="Kyrpides N."/>
            <person name="Mikhailova N."/>
            <person name="Richardson P."/>
            <person name="Mackenzie C."/>
            <person name="Choudhary M."/>
            <person name="Donohue T.J."/>
            <person name="Kaplan S."/>
        </authorList>
    </citation>
    <scope>NUCLEOTIDE SEQUENCE [LARGE SCALE GENOMIC DNA]</scope>
    <source>
        <strain>ATCC 17029 / ATH 2.4.9</strain>
    </source>
</reference>
<organism>
    <name type="scientific">Cereibacter sphaeroides (strain ATCC 17029 / ATH 2.4.9)</name>
    <name type="common">Rhodobacter sphaeroides</name>
    <dbReference type="NCBI Taxonomy" id="349101"/>
    <lineage>
        <taxon>Bacteria</taxon>
        <taxon>Pseudomonadati</taxon>
        <taxon>Pseudomonadota</taxon>
        <taxon>Alphaproteobacteria</taxon>
        <taxon>Rhodobacterales</taxon>
        <taxon>Paracoccaceae</taxon>
        <taxon>Cereibacter</taxon>
    </lineage>
</organism>
<accession>A3PJ64</accession>
<evidence type="ECO:0000255" key="1">
    <source>
        <dbReference type="HAMAP-Rule" id="MF_01815"/>
    </source>
</evidence>